<feature type="chain" id="PRO_1000122352" description="Large ribosomal subunit protein bL20">
    <location>
        <begin position="1"/>
        <end position="121"/>
    </location>
</feature>
<evidence type="ECO:0000255" key="1">
    <source>
        <dbReference type="HAMAP-Rule" id="MF_00382"/>
    </source>
</evidence>
<evidence type="ECO:0000305" key="2"/>
<keyword id="KW-0687">Ribonucleoprotein</keyword>
<keyword id="KW-0689">Ribosomal protein</keyword>
<keyword id="KW-0694">RNA-binding</keyword>
<keyword id="KW-0699">rRNA-binding</keyword>
<comment type="function">
    <text evidence="1">Binds directly to 23S ribosomal RNA and is necessary for the in vitro assembly process of the 50S ribosomal subunit. It is not involved in the protein synthesizing functions of that subunit.</text>
</comment>
<comment type="similarity">
    <text evidence="1">Belongs to the bacterial ribosomal protein bL20 family.</text>
</comment>
<reference key="1">
    <citation type="journal article" date="2013" name="Proc. Natl. Acad. Sci. U.S.A.">
        <title>Polynucleobacter necessarius, a model for genome reduction in both free-living and symbiotic bacteria.</title>
        <authorList>
            <person name="Boscaro V."/>
            <person name="Felletti M."/>
            <person name="Vannini C."/>
            <person name="Ackerman M.S."/>
            <person name="Chain P.S."/>
            <person name="Malfatti S."/>
            <person name="Vergez L.M."/>
            <person name="Shin M."/>
            <person name="Doak T.G."/>
            <person name="Lynch M."/>
            <person name="Petroni G."/>
        </authorList>
    </citation>
    <scope>NUCLEOTIDE SEQUENCE [LARGE SCALE GENOMIC DNA]</scope>
    <source>
        <strain>STIR1</strain>
    </source>
</reference>
<accession>B1XV11</accession>
<proteinExistence type="inferred from homology"/>
<organism>
    <name type="scientific">Polynucleobacter necessarius subsp. necessarius (strain STIR1)</name>
    <dbReference type="NCBI Taxonomy" id="452638"/>
    <lineage>
        <taxon>Bacteria</taxon>
        <taxon>Pseudomonadati</taxon>
        <taxon>Pseudomonadota</taxon>
        <taxon>Betaproteobacteria</taxon>
        <taxon>Burkholderiales</taxon>
        <taxon>Burkholderiaceae</taxon>
        <taxon>Polynucleobacter</taxon>
    </lineage>
</organism>
<protein>
    <recommendedName>
        <fullName evidence="1">Large ribosomal subunit protein bL20</fullName>
    </recommendedName>
    <alternativeName>
        <fullName evidence="2">50S ribosomal protein L20</fullName>
    </alternativeName>
</protein>
<sequence length="121" mass="13746">MPRVKRGVTARARHKKITDAATGYRGRRKNVFRIAKQAVMRAGQYAYRDRRNKKRVFRALWIARINAAVRQHDVTYSVFMNGMKKVAIELDRKVLSDMAIADKAAFAALVTRIKSVVNAAA</sequence>
<gene>
    <name evidence="1" type="primary">rplT</name>
    <name type="ordered locus">Pnec_1007</name>
</gene>
<name>RL20_POLNS</name>
<dbReference type="EMBL" id="CP001010">
    <property type="protein sequence ID" value="ACB44188.1"/>
    <property type="molecule type" value="Genomic_DNA"/>
</dbReference>
<dbReference type="SMR" id="B1XV11"/>
<dbReference type="STRING" id="452638.Pnec_1007"/>
<dbReference type="KEGG" id="pne:Pnec_1007"/>
<dbReference type="eggNOG" id="COG0292">
    <property type="taxonomic scope" value="Bacteria"/>
</dbReference>
<dbReference type="HOGENOM" id="CLU_123265_0_1_4"/>
<dbReference type="OrthoDB" id="9808966at2"/>
<dbReference type="GO" id="GO:1990904">
    <property type="term" value="C:ribonucleoprotein complex"/>
    <property type="evidence" value="ECO:0007669"/>
    <property type="project" value="UniProtKB-KW"/>
</dbReference>
<dbReference type="GO" id="GO:0005840">
    <property type="term" value="C:ribosome"/>
    <property type="evidence" value="ECO:0007669"/>
    <property type="project" value="UniProtKB-KW"/>
</dbReference>
<dbReference type="GO" id="GO:0019843">
    <property type="term" value="F:rRNA binding"/>
    <property type="evidence" value="ECO:0007669"/>
    <property type="project" value="UniProtKB-UniRule"/>
</dbReference>
<dbReference type="GO" id="GO:0003735">
    <property type="term" value="F:structural constituent of ribosome"/>
    <property type="evidence" value="ECO:0007669"/>
    <property type="project" value="InterPro"/>
</dbReference>
<dbReference type="GO" id="GO:0000027">
    <property type="term" value="P:ribosomal large subunit assembly"/>
    <property type="evidence" value="ECO:0007669"/>
    <property type="project" value="UniProtKB-UniRule"/>
</dbReference>
<dbReference type="GO" id="GO:0006412">
    <property type="term" value="P:translation"/>
    <property type="evidence" value="ECO:0007669"/>
    <property type="project" value="InterPro"/>
</dbReference>
<dbReference type="CDD" id="cd07026">
    <property type="entry name" value="Ribosomal_L20"/>
    <property type="match status" value="1"/>
</dbReference>
<dbReference type="FunFam" id="1.10.1900.20:FF:000001">
    <property type="entry name" value="50S ribosomal protein L20"/>
    <property type="match status" value="1"/>
</dbReference>
<dbReference type="Gene3D" id="6.10.160.10">
    <property type="match status" value="1"/>
</dbReference>
<dbReference type="Gene3D" id="1.10.1900.20">
    <property type="entry name" value="Ribosomal protein L20"/>
    <property type="match status" value="1"/>
</dbReference>
<dbReference type="HAMAP" id="MF_00382">
    <property type="entry name" value="Ribosomal_bL20"/>
    <property type="match status" value="1"/>
</dbReference>
<dbReference type="InterPro" id="IPR005813">
    <property type="entry name" value="Ribosomal_bL20"/>
</dbReference>
<dbReference type="InterPro" id="IPR049946">
    <property type="entry name" value="RIBOSOMAL_L20_CS"/>
</dbReference>
<dbReference type="InterPro" id="IPR035566">
    <property type="entry name" value="Ribosomal_protein_bL20_C"/>
</dbReference>
<dbReference type="NCBIfam" id="TIGR01032">
    <property type="entry name" value="rplT_bact"/>
    <property type="match status" value="1"/>
</dbReference>
<dbReference type="PANTHER" id="PTHR10986">
    <property type="entry name" value="39S RIBOSOMAL PROTEIN L20"/>
    <property type="match status" value="1"/>
</dbReference>
<dbReference type="Pfam" id="PF00453">
    <property type="entry name" value="Ribosomal_L20"/>
    <property type="match status" value="1"/>
</dbReference>
<dbReference type="PRINTS" id="PR00062">
    <property type="entry name" value="RIBOSOMALL20"/>
</dbReference>
<dbReference type="SUPFAM" id="SSF74731">
    <property type="entry name" value="Ribosomal protein L20"/>
    <property type="match status" value="1"/>
</dbReference>
<dbReference type="PROSITE" id="PS00937">
    <property type="entry name" value="RIBOSOMAL_L20"/>
    <property type="match status" value="1"/>
</dbReference>